<proteinExistence type="inferred from homology"/>
<name>NU4LC_ORYSI</name>
<geneLocation type="chloroplast"/>
<evidence type="ECO:0000255" key="1">
    <source>
        <dbReference type="HAMAP-Rule" id="MF_01456"/>
    </source>
</evidence>
<organism>
    <name type="scientific">Oryza sativa subsp. indica</name>
    <name type="common">Rice</name>
    <dbReference type="NCBI Taxonomy" id="39946"/>
    <lineage>
        <taxon>Eukaryota</taxon>
        <taxon>Viridiplantae</taxon>
        <taxon>Streptophyta</taxon>
        <taxon>Embryophyta</taxon>
        <taxon>Tracheophyta</taxon>
        <taxon>Spermatophyta</taxon>
        <taxon>Magnoliopsida</taxon>
        <taxon>Liliopsida</taxon>
        <taxon>Poales</taxon>
        <taxon>Poaceae</taxon>
        <taxon>BOP clade</taxon>
        <taxon>Oryzoideae</taxon>
        <taxon>Oryzeae</taxon>
        <taxon>Oryzinae</taxon>
        <taxon>Oryza</taxon>
        <taxon>Oryza sativa</taxon>
    </lineage>
</organism>
<gene>
    <name evidence="1" type="primary">ndhE</name>
    <name type="ORF">9311170</name>
</gene>
<dbReference type="EC" id="7.1.1.-" evidence="1"/>
<dbReference type="EMBL" id="AY522329">
    <property type="protein sequence ID" value="AAS46094.1"/>
    <property type="molecule type" value="Genomic_DNA"/>
</dbReference>
<dbReference type="RefSeq" id="YP_009161421.1">
    <property type="nucleotide sequence ID" value="NC_027678.1"/>
</dbReference>
<dbReference type="RefSeq" id="YP_654254.1">
    <property type="nucleotide sequence ID" value="NC_008155.1"/>
</dbReference>
<dbReference type="SMR" id="P0C333"/>
<dbReference type="STRING" id="39946.P0C333"/>
<dbReference type="GeneID" id="4126911"/>
<dbReference type="Proteomes" id="UP000007015">
    <property type="component" value="Chloroplast"/>
</dbReference>
<dbReference type="GO" id="GO:0009535">
    <property type="term" value="C:chloroplast thylakoid membrane"/>
    <property type="evidence" value="ECO:0007669"/>
    <property type="project" value="UniProtKB-SubCell"/>
</dbReference>
<dbReference type="GO" id="GO:0030964">
    <property type="term" value="C:NADH dehydrogenase complex"/>
    <property type="evidence" value="ECO:0007669"/>
    <property type="project" value="TreeGrafter"/>
</dbReference>
<dbReference type="GO" id="GO:0009536">
    <property type="term" value="C:plastid"/>
    <property type="evidence" value="ECO:0000305"/>
    <property type="project" value="Gramene"/>
</dbReference>
<dbReference type="GO" id="GO:0016655">
    <property type="term" value="F:oxidoreductase activity, acting on NAD(P)H, quinone or similar compound as acceptor"/>
    <property type="evidence" value="ECO:0007669"/>
    <property type="project" value="UniProtKB-UniRule"/>
</dbReference>
<dbReference type="GO" id="GO:0048038">
    <property type="term" value="F:quinone binding"/>
    <property type="evidence" value="ECO:0007669"/>
    <property type="project" value="UniProtKB-KW"/>
</dbReference>
<dbReference type="GO" id="GO:0042773">
    <property type="term" value="P:ATP synthesis coupled electron transport"/>
    <property type="evidence" value="ECO:0007669"/>
    <property type="project" value="InterPro"/>
</dbReference>
<dbReference type="GO" id="GO:0019684">
    <property type="term" value="P:photosynthesis, light reaction"/>
    <property type="evidence" value="ECO:0007669"/>
    <property type="project" value="UniProtKB-UniRule"/>
</dbReference>
<dbReference type="FunFam" id="1.10.287.3510:FF:000001">
    <property type="entry name" value="NADH-quinone oxidoreductase subunit K"/>
    <property type="match status" value="1"/>
</dbReference>
<dbReference type="Gene3D" id="1.10.287.3510">
    <property type="match status" value="1"/>
</dbReference>
<dbReference type="HAMAP" id="MF_01456">
    <property type="entry name" value="NDH1_NuoK"/>
    <property type="match status" value="1"/>
</dbReference>
<dbReference type="InterPro" id="IPR001133">
    <property type="entry name" value="NADH_UbQ_OxRdtase_chain4L/K"/>
</dbReference>
<dbReference type="InterPro" id="IPR039428">
    <property type="entry name" value="NUOK/Mnh_C1-like"/>
</dbReference>
<dbReference type="NCBIfam" id="NF004320">
    <property type="entry name" value="PRK05715.1-2"/>
    <property type="match status" value="1"/>
</dbReference>
<dbReference type="PANTHER" id="PTHR11434:SF16">
    <property type="entry name" value="NADH-UBIQUINONE OXIDOREDUCTASE CHAIN 4L"/>
    <property type="match status" value="1"/>
</dbReference>
<dbReference type="PANTHER" id="PTHR11434">
    <property type="entry name" value="NADH-UBIQUINONE OXIDOREDUCTASE SUBUNIT ND4L"/>
    <property type="match status" value="1"/>
</dbReference>
<dbReference type="Pfam" id="PF00420">
    <property type="entry name" value="Oxidored_q2"/>
    <property type="match status" value="1"/>
</dbReference>
<sequence>MMFEHVLFLSVYLFSIGIYGLITSRNMVRALICLELILNSINLNLVTFSDLFDSRQLKGDIFAIFVIALAAAEAAIGLSILSSIHRNRKSTRINQSNFLNN</sequence>
<accession>P0C333</accession>
<accession>P12128</accession>
<accession>Q6QXX2</accession>
<accession>Q6QY35</accession>
<comment type="function">
    <text evidence="1">NDH shuttles electrons from NAD(P)H:plastoquinone, via FMN and iron-sulfur (Fe-S) centers, to quinones in the photosynthetic chain and possibly in a chloroplast respiratory chain. The immediate electron acceptor for the enzyme in this species is believed to be plastoquinone. Couples the redox reaction to proton translocation, and thus conserves the redox energy in a proton gradient.</text>
</comment>
<comment type="catalytic activity">
    <reaction evidence="1">
        <text>a plastoquinone + NADH + (n+1) H(+)(in) = a plastoquinol + NAD(+) + n H(+)(out)</text>
        <dbReference type="Rhea" id="RHEA:42608"/>
        <dbReference type="Rhea" id="RHEA-COMP:9561"/>
        <dbReference type="Rhea" id="RHEA-COMP:9562"/>
        <dbReference type="ChEBI" id="CHEBI:15378"/>
        <dbReference type="ChEBI" id="CHEBI:17757"/>
        <dbReference type="ChEBI" id="CHEBI:57540"/>
        <dbReference type="ChEBI" id="CHEBI:57945"/>
        <dbReference type="ChEBI" id="CHEBI:62192"/>
    </reaction>
</comment>
<comment type="catalytic activity">
    <reaction evidence="1">
        <text>a plastoquinone + NADPH + (n+1) H(+)(in) = a plastoquinol + NADP(+) + n H(+)(out)</text>
        <dbReference type="Rhea" id="RHEA:42612"/>
        <dbReference type="Rhea" id="RHEA-COMP:9561"/>
        <dbReference type="Rhea" id="RHEA-COMP:9562"/>
        <dbReference type="ChEBI" id="CHEBI:15378"/>
        <dbReference type="ChEBI" id="CHEBI:17757"/>
        <dbReference type="ChEBI" id="CHEBI:57783"/>
        <dbReference type="ChEBI" id="CHEBI:58349"/>
        <dbReference type="ChEBI" id="CHEBI:62192"/>
    </reaction>
</comment>
<comment type="subunit">
    <text evidence="1">NDH is composed of at least 16 different subunits, 5 of which are encoded in the nucleus.</text>
</comment>
<comment type="subcellular location">
    <subcellularLocation>
        <location evidence="1">Plastid</location>
        <location evidence="1">Chloroplast thylakoid membrane</location>
        <topology evidence="1">Multi-pass membrane protein</topology>
    </subcellularLocation>
</comment>
<comment type="similarity">
    <text evidence="1">Belongs to the complex I subunit 4L family.</text>
</comment>
<protein>
    <recommendedName>
        <fullName evidence="1">NAD(P)H-quinone oxidoreductase subunit 4L, chloroplastic</fullName>
        <ecNumber evidence="1">7.1.1.-</ecNumber>
    </recommendedName>
    <alternativeName>
        <fullName evidence="1">NAD(P)H dehydrogenase subunit 4L</fullName>
    </alternativeName>
    <alternativeName>
        <fullName evidence="1">NADH-plastoquinone oxidoreductase subunit 4L</fullName>
    </alternativeName>
</protein>
<reference key="1">
    <citation type="journal article" date="2004" name="Plant Physiol.">
        <title>A comparison of rice chloroplast genomes.</title>
        <authorList>
            <person name="Tang J."/>
            <person name="Xia H."/>
            <person name="Cao M."/>
            <person name="Zhang X."/>
            <person name="Zeng W."/>
            <person name="Hu S."/>
            <person name="Tong W."/>
            <person name="Wang J."/>
            <person name="Wang J."/>
            <person name="Yu J."/>
            <person name="Yang H."/>
            <person name="Zhu L."/>
        </authorList>
    </citation>
    <scope>NUCLEOTIDE SEQUENCE [LARGE SCALE GENOMIC DNA]</scope>
    <source>
        <strain>cv. 93-11</strain>
    </source>
</reference>
<feature type="chain" id="PRO_0000288700" description="NAD(P)H-quinone oxidoreductase subunit 4L, chloroplastic">
    <location>
        <begin position="1"/>
        <end position="101"/>
    </location>
</feature>
<feature type="transmembrane region" description="Helical" evidence="1">
    <location>
        <begin position="2"/>
        <end position="22"/>
    </location>
</feature>
<feature type="transmembrane region" description="Helical" evidence="1">
    <location>
        <begin position="32"/>
        <end position="52"/>
    </location>
</feature>
<feature type="transmembrane region" description="Helical" evidence="1">
    <location>
        <begin position="61"/>
        <end position="81"/>
    </location>
</feature>
<keyword id="KW-0150">Chloroplast</keyword>
<keyword id="KW-0472">Membrane</keyword>
<keyword id="KW-0520">NAD</keyword>
<keyword id="KW-0521">NADP</keyword>
<keyword id="KW-0934">Plastid</keyword>
<keyword id="KW-0618">Plastoquinone</keyword>
<keyword id="KW-0874">Quinone</keyword>
<keyword id="KW-1185">Reference proteome</keyword>
<keyword id="KW-0793">Thylakoid</keyword>
<keyword id="KW-1278">Translocase</keyword>
<keyword id="KW-0812">Transmembrane</keyword>
<keyword id="KW-1133">Transmembrane helix</keyword>
<keyword id="KW-0813">Transport</keyword>